<name>EFG2_HAHCH</name>
<keyword id="KW-0963">Cytoplasm</keyword>
<keyword id="KW-0251">Elongation factor</keyword>
<keyword id="KW-0342">GTP-binding</keyword>
<keyword id="KW-0547">Nucleotide-binding</keyword>
<keyword id="KW-0648">Protein biosynthesis</keyword>
<keyword id="KW-1185">Reference proteome</keyword>
<reference key="1">
    <citation type="journal article" date="2005" name="Nucleic Acids Res.">
        <title>Genomic blueprint of Hahella chejuensis, a marine microbe producing an algicidal agent.</title>
        <authorList>
            <person name="Jeong H."/>
            <person name="Yim J.H."/>
            <person name="Lee C."/>
            <person name="Choi S.-H."/>
            <person name="Park Y.K."/>
            <person name="Yoon S.H."/>
            <person name="Hur C.-G."/>
            <person name="Kang H.-Y."/>
            <person name="Kim D."/>
            <person name="Lee H.H."/>
            <person name="Park K.H."/>
            <person name="Park S.-H."/>
            <person name="Park H.-S."/>
            <person name="Lee H.K."/>
            <person name="Oh T.K."/>
            <person name="Kim J.F."/>
        </authorList>
    </citation>
    <scope>NUCLEOTIDE SEQUENCE [LARGE SCALE GENOMIC DNA]</scope>
    <source>
        <strain>KCTC 2396</strain>
    </source>
</reference>
<gene>
    <name evidence="1" type="primary">fusA2</name>
    <name type="ordered locus">HCH_06988</name>
</gene>
<evidence type="ECO:0000255" key="1">
    <source>
        <dbReference type="HAMAP-Rule" id="MF_00054"/>
    </source>
</evidence>
<proteinExistence type="inferred from homology"/>
<dbReference type="EMBL" id="CP000155">
    <property type="protein sequence ID" value="ABC33603.1"/>
    <property type="molecule type" value="Genomic_DNA"/>
</dbReference>
<dbReference type="RefSeq" id="WP_011400653.1">
    <property type="nucleotide sequence ID" value="NC_007645.1"/>
</dbReference>
<dbReference type="SMR" id="Q2S6X1"/>
<dbReference type="STRING" id="349521.HCH_06988"/>
<dbReference type="KEGG" id="hch:HCH_06988"/>
<dbReference type="eggNOG" id="COG0480">
    <property type="taxonomic scope" value="Bacteria"/>
</dbReference>
<dbReference type="HOGENOM" id="CLU_002794_4_1_6"/>
<dbReference type="OrthoDB" id="5926900at2"/>
<dbReference type="Proteomes" id="UP000000238">
    <property type="component" value="Chromosome"/>
</dbReference>
<dbReference type="GO" id="GO:0005737">
    <property type="term" value="C:cytoplasm"/>
    <property type="evidence" value="ECO:0007669"/>
    <property type="project" value="UniProtKB-SubCell"/>
</dbReference>
<dbReference type="GO" id="GO:0005525">
    <property type="term" value="F:GTP binding"/>
    <property type="evidence" value="ECO:0007669"/>
    <property type="project" value="UniProtKB-UniRule"/>
</dbReference>
<dbReference type="GO" id="GO:0003924">
    <property type="term" value="F:GTPase activity"/>
    <property type="evidence" value="ECO:0007669"/>
    <property type="project" value="InterPro"/>
</dbReference>
<dbReference type="GO" id="GO:0097216">
    <property type="term" value="F:guanosine tetraphosphate binding"/>
    <property type="evidence" value="ECO:0007669"/>
    <property type="project" value="UniProtKB-ARBA"/>
</dbReference>
<dbReference type="GO" id="GO:0003746">
    <property type="term" value="F:translation elongation factor activity"/>
    <property type="evidence" value="ECO:0007669"/>
    <property type="project" value="UniProtKB-UniRule"/>
</dbReference>
<dbReference type="GO" id="GO:0032790">
    <property type="term" value="P:ribosome disassembly"/>
    <property type="evidence" value="ECO:0007669"/>
    <property type="project" value="TreeGrafter"/>
</dbReference>
<dbReference type="CDD" id="cd01886">
    <property type="entry name" value="EF-G"/>
    <property type="match status" value="1"/>
</dbReference>
<dbReference type="CDD" id="cd16262">
    <property type="entry name" value="EFG_III"/>
    <property type="match status" value="1"/>
</dbReference>
<dbReference type="CDD" id="cd01434">
    <property type="entry name" value="EFG_mtEFG1_IV"/>
    <property type="match status" value="1"/>
</dbReference>
<dbReference type="CDD" id="cd03713">
    <property type="entry name" value="EFG_mtEFG_C"/>
    <property type="match status" value="1"/>
</dbReference>
<dbReference type="CDD" id="cd04088">
    <property type="entry name" value="EFG_mtEFG_II"/>
    <property type="match status" value="1"/>
</dbReference>
<dbReference type="FunFam" id="2.40.30.10:FF:000006">
    <property type="entry name" value="Elongation factor G"/>
    <property type="match status" value="1"/>
</dbReference>
<dbReference type="FunFam" id="3.30.70.240:FF:000001">
    <property type="entry name" value="Elongation factor G"/>
    <property type="match status" value="1"/>
</dbReference>
<dbReference type="FunFam" id="3.40.50.300:FF:000029">
    <property type="entry name" value="Elongation factor G"/>
    <property type="match status" value="1"/>
</dbReference>
<dbReference type="FunFam" id="3.30.70.870:FF:000002">
    <property type="entry name" value="Translation elongation factor 2"/>
    <property type="match status" value="1"/>
</dbReference>
<dbReference type="Gene3D" id="3.30.230.10">
    <property type="match status" value="1"/>
</dbReference>
<dbReference type="Gene3D" id="3.30.70.240">
    <property type="match status" value="1"/>
</dbReference>
<dbReference type="Gene3D" id="3.30.70.870">
    <property type="entry name" value="Elongation Factor G (Translational Gtpase), domain 3"/>
    <property type="match status" value="1"/>
</dbReference>
<dbReference type="Gene3D" id="3.40.50.300">
    <property type="entry name" value="P-loop containing nucleotide triphosphate hydrolases"/>
    <property type="match status" value="1"/>
</dbReference>
<dbReference type="Gene3D" id="2.40.30.10">
    <property type="entry name" value="Translation factors"/>
    <property type="match status" value="1"/>
</dbReference>
<dbReference type="HAMAP" id="MF_00054_B">
    <property type="entry name" value="EF_G_EF_2_B"/>
    <property type="match status" value="1"/>
</dbReference>
<dbReference type="InterPro" id="IPR041095">
    <property type="entry name" value="EFG_II"/>
</dbReference>
<dbReference type="InterPro" id="IPR009022">
    <property type="entry name" value="EFG_III"/>
</dbReference>
<dbReference type="InterPro" id="IPR035647">
    <property type="entry name" value="EFG_III/V"/>
</dbReference>
<dbReference type="InterPro" id="IPR047872">
    <property type="entry name" value="EFG_IV"/>
</dbReference>
<dbReference type="InterPro" id="IPR035649">
    <property type="entry name" value="EFG_V"/>
</dbReference>
<dbReference type="InterPro" id="IPR000640">
    <property type="entry name" value="EFG_V-like"/>
</dbReference>
<dbReference type="InterPro" id="IPR004161">
    <property type="entry name" value="EFTu-like_2"/>
</dbReference>
<dbReference type="InterPro" id="IPR027417">
    <property type="entry name" value="P-loop_NTPase"/>
</dbReference>
<dbReference type="InterPro" id="IPR020568">
    <property type="entry name" value="Ribosomal_Su5_D2-typ_SF"/>
</dbReference>
<dbReference type="InterPro" id="IPR014721">
    <property type="entry name" value="Ribsml_uS5_D2-typ_fold_subgr"/>
</dbReference>
<dbReference type="InterPro" id="IPR005225">
    <property type="entry name" value="Small_GTP-bd"/>
</dbReference>
<dbReference type="InterPro" id="IPR000795">
    <property type="entry name" value="T_Tr_GTP-bd_dom"/>
</dbReference>
<dbReference type="InterPro" id="IPR009000">
    <property type="entry name" value="Transl_B-barrel_sf"/>
</dbReference>
<dbReference type="InterPro" id="IPR004540">
    <property type="entry name" value="Transl_elong_EFG/EF2"/>
</dbReference>
<dbReference type="InterPro" id="IPR005517">
    <property type="entry name" value="Transl_elong_EFG/EF2_IV"/>
</dbReference>
<dbReference type="NCBIfam" id="TIGR00484">
    <property type="entry name" value="EF-G"/>
    <property type="match status" value="1"/>
</dbReference>
<dbReference type="NCBIfam" id="NF009381">
    <property type="entry name" value="PRK12740.1-5"/>
    <property type="match status" value="1"/>
</dbReference>
<dbReference type="NCBIfam" id="TIGR00231">
    <property type="entry name" value="small_GTP"/>
    <property type="match status" value="1"/>
</dbReference>
<dbReference type="PANTHER" id="PTHR43261:SF1">
    <property type="entry name" value="RIBOSOME-RELEASING FACTOR 2, MITOCHONDRIAL"/>
    <property type="match status" value="1"/>
</dbReference>
<dbReference type="PANTHER" id="PTHR43261">
    <property type="entry name" value="TRANSLATION ELONGATION FACTOR G-RELATED"/>
    <property type="match status" value="1"/>
</dbReference>
<dbReference type="Pfam" id="PF00679">
    <property type="entry name" value="EFG_C"/>
    <property type="match status" value="1"/>
</dbReference>
<dbReference type="Pfam" id="PF14492">
    <property type="entry name" value="EFG_III"/>
    <property type="match status" value="1"/>
</dbReference>
<dbReference type="Pfam" id="PF03764">
    <property type="entry name" value="EFG_IV"/>
    <property type="match status" value="1"/>
</dbReference>
<dbReference type="Pfam" id="PF00009">
    <property type="entry name" value="GTP_EFTU"/>
    <property type="match status" value="1"/>
</dbReference>
<dbReference type="Pfam" id="PF03144">
    <property type="entry name" value="GTP_EFTU_D2"/>
    <property type="match status" value="1"/>
</dbReference>
<dbReference type="PRINTS" id="PR00315">
    <property type="entry name" value="ELONGATNFCT"/>
</dbReference>
<dbReference type="SMART" id="SM00838">
    <property type="entry name" value="EFG_C"/>
    <property type="match status" value="1"/>
</dbReference>
<dbReference type="SMART" id="SM00889">
    <property type="entry name" value="EFG_IV"/>
    <property type="match status" value="1"/>
</dbReference>
<dbReference type="SUPFAM" id="SSF54980">
    <property type="entry name" value="EF-G C-terminal domain-like"/>
    <property type="match status" value="2"/>
</dbReference>
<dbReference type="SUPFAM" id="SSF52540">
    <property type="entry name" value="P-loop containing nucleoside triphosphate hydrolases"/>
    <property type="match status" value="1"/>
</dbReference>
<dbReference type="SUPFAM" id="SSF54211">
    <property type="entry name" value="Ribosomal protein S5 domain 2-like"/>
    <property type="match status" value="1"/>
</dbReference>
<dbReference type="SUPFAM" id="SSF50447">
    <property type="entry name" value="Translation proteins"/>
    <property type="match status" value="1"/>
</dbReference>
<dbReference type="PROSITE" id="PS51722">
    <property type="entry name" value="G_TR_2"/>
    <property type="match status" value="1"/>
</dbReference>
<feature type="chain" id="PRO_0000263459" description="Elongation factor G 2">
    <location>
        <begin position="1"/>
        <end position="678"/>
    </location>
</feature>
<feature type="domain" description="tr-type G">
    <location>
        <begin position="4"/>
        <end position="278"/>
    </location>
</feature>
<feature type="binding site" evidence="1">
    <location>
        <begin position="13"/>
        <end position="20"/>
    </location>
    <ligand>
        <name>GTP</name>
        <dbReference type="ChEBI" id="CHEBI:37565"/>
    </ligand>
</feature>
<feature type="binding site" evidence="1">
    <location>
        <begin position="77"/>
        <end position="81"/>
    </location>
    <ligand>
        <name>GTP</name>
        <dbReference type="ChEBI" id="CHEBI:37565"/>
    </ligand>
</feature>
<feature type="binding site" evidence="1">
    <location>
        <begin position="131"/>
        <end position="134"/>
    </location>
    <ligand>
        <name>GTP</name>
        <dbReference type="ChEBI" id="CHEBI:37565"/>
    </ligand>
</feature>
<sequence>MKLQKLRNIGIIAHVDAGKTTLTERLLHFTGALHSMGEVHHGGTVTDHMVQERQRGITIASAAVTVGWRDHRINIIDTPGHIDFNIEVNRSLRVLDGAVVVFDSVAGVEPQSETNWRLADQYGVPRICLVNKMDRIGADYLRVVAMIRERLGAQPLVVHLPVFVEETYVGLIDLTTMSLHRWNADDGWKYSSEEITPEYQEQAAQYRAQLEETLVELDDELLEGWFNGATLQADDLKRLIRQGVVSGAFVPVLCASAFKNKGVQMVLDAVVDYLPSPQEVKGMETVDGAQIVDADVDGAFAALAFKVVNDKHGALTYVRVYRGTLQSGSRVLNTNVGQYERIGRIYEMHADRKVARDRIGAGDIVALVGMKHTQTGDTLCAPEAPLVLERINAPEPVMDIVIEPKSRQDQDRLGEALRAIVGEDPSLRLSTGAAGETLVSGMGELHLEIVVDRLQTDFDIAVTVGRPQVAYRETITQSAAVDYVYKKQKGGPGQFAEVRMRFEPIAGDGIEFESQIVGAAIPREYIPAVEDGVRQAARSGVLGGYPCGGFKAVLLDGAYHAQDSSQLAFSVAGREAFKEAMAQATPRLLEPVMAVEIVTPRDHVGDCIGDLMRRRGSILNQLDRGDACVINAEAPLAEMFGYIGDLRTMTAGRASFSMTFSHYAETPQGVADAVLNAD</sequence>
<comment type="function">
    <text evidence="1">Catalyzes the GTP-dependent ribosomal translocation step during translation elongation. During this step, the ribosome changes from the pre-translocational (PRE) to the post-translocational (POST) state as the newly formed A-site-bound peptidyl-tRNA and P-site-bound deacylated tRNA move to the P and E sites, respectively. Catalyzes the coordinated movement of the two tRNA molecules, the mRNA and conformational changes in the ribosome.</text>
</comment>
<comment type="subcellular location">
    <subcellularLocation>
        <location evidence="1">Cytoplasm</location>
    </subcellularLocation>
</comment>
<comment type="similarity">
    <text evidence="1">Belongs to the TRAFAC class translation factor GTPase superfamily. Classic translation factor GTPase family. EF-G/EF-2 subfamily.</text>
</comment>
<protein>
    <recommendedName>
        <fullName evidence="1">Elongation factor G 2</fullName>
        <shortName evidence="1">EF-G 2</shortName>
    </recommendedName>
</protein>
<accession>Q2S6X1</accession>
<organism>
    <name type="scientific">Hahella chejuensis (strain KCTC 2396)</name>
    <dbReference type="NCBI Taxonomy" id="349521"/>
    <lineage>
        <taxon>Bacteria</taxon>
        <taxon>Pseudomonadati</taxon>
        <taxon>Pseudomonadota</taxon>
        <taxon>Gammaproteobacteria</taxon>
        <taxon>Oceanospirillales</taxon>
        <taxon>Hahellaceae</taxon>
        <taxon>Hahella</taxon>
    </lineage>
</organism>